<accession>A3QH11</accession>
<comment type="function">
    <text evidence="1">Nucleotide-binding protein.</text>
</comment>
<comment type="similarity">
    <text evidence="1">Belongs to the YajQ family.</text>
</comment>
<reference key="1">
    <citation type="submission" date="2007-03" db="EMBL/GenBank/DDBJ databases">
        <title>Complete sequence of Shewanella loihica PV-4.</title>
        <authorList>
            <consortium name="US DOE Joint Genome Institute"/>
            <person name="Copeland A."/>
            <person name="Lucas S."/>
            <person name="Lapidus A."/>
            <person name="Barry K."/>
            <person name="Detter J.C."/>
            <person name="Glavina del Rio T."/>
            <person name="Hammon N."/>
            <person name="Israni S."/>
            <person name="Dalin E."/>
            <person name="Tice H."/>
            <person name="Pitluck S."/>
            <person name="Chain P."/>
            <person name="Malfatti S."/>
            <person name="Shin M."/>
            <person name="Vergez L."/>
            <person name="Schmutz J."/>
            <person name="Larimer F."/>
            <person name="Land M."/>
            <person name="Hauser L."/>
            <person name="Kyrpides N."/>
            <person name="Mikhailova N."/>
            <person name="Romine M.F."/>
            <person name="Serres G."/>
            <person name="Fredrickson J."/>
            <person name="Tiedje J."/>
            <person name="Richardson P."/>
        </authorList>
    </citation>
    <scope>NUCLEOTIDE SEQUENCE [LARGE SCALE GENOMIC DNA]</scope>
    <source>
        <strain>ATCC BAA-1088 / PV-4</strain>
    </source>
</reference>
<gene>
    <name type="ordered locus">Shew_2893</name>
</gene>
<keyword id="KW-0547">Nucleotide-binding</keyword>
<keyword id="KW-1185">Reference proteome</keyword>
<name>Y2893_SHELP</name>
<sequence length="161" mass="18228">MPSMDIVSEVNEVELRNAVDNTRRELDSRFDFRGVESEVSYKDHQVTLSSESDFQCQQMVDMLRNQLSKRNVDPASMDVAEKAIHSGKTFSLKVTFKEGIDSLVAKKLVKLIKDSKLKVQAAIQGDSIRVTGKKRDDLQAVMAIARESDLGQPFQFNNFRD</sequence>
<organism>
    <name type="scientific">Shewanella loihica (strain ATCC BAA-1088 / PV-4)</name>
    <dbReference type="NCBI Taxonomy" id="323850"/>
    <lineage>
        <taxon>Bacteria</taxon>
        <taxon>Pseudomonadati</taxon>
        <taxon>Pseudomonadota</taxon>
        <taxon>Gammaproteobacteria</taxon>
        <taxon>Alteromonadales</taxon>
        <taxon>Shewanellaceae</taxon>
        <taxon>Shewanella</taxon>
    </lineage>
</organism>
<evidence type="ECO:0000255" key="1">
    <source>
        <dbReference type="HAMAP-Rule" id="MF_00632"/>
    </source>
</evidence>
<dbReference type="EMBL" id="CP000606">
    <property type="protein sequence ID" value="ABO24759.1"/>
    <property type="molecule type" value="Genomic_DNA"/>
</dbReference>
<dbReference type="RefSeq" id="WP_011866690.1">
    <property type="nucleotide sequence ID" value="NC_009092.1"/>
</dbReference>
<dbReference type="SMR" id="A3QH11"/>
<dbReference type="STRING" id="323850.Shew_2893"/>
<dbReference type="KEGG" id="slo:Shew_2893"/>
<dbReference type="eggNOG" id="COG1666">
    <property type="taxonomic scope" value="Bacteria"/>
</dbReference>
<dbReference type="HOGENOM" id="CLU_099839_1_0_6"/>
<dbReference type="OrthoDB" id="9801447at2"/>
<dbReference type="Proteomes" id="UP000001558">
    <property type="component" value="Chromosome"/>
</dbReference>
<dbReference type="GO" id="GO:0005829">
    <property type="term" value="C:cytosol"/>
    <property type="evidence" value="ECO:0007669"/>
    <property type="project" value="TreeGrafter"/>
</dbReference>
<dbReference type="GO" id="GO:0000166">
    <property type="term" value="F:nucleotide binding"/>
    <property type="evidence" value="ECO:0007669"/>
    <property type="project" value="TreeGrafter"/>
</dbReference>
<dbReference type="CDD" id="cd11740">
    <property type="entry name" value="YajQ_like"/>
    <property type="match status" value="1"/>
</dbReference>
<dbReference type="FunFam" id="3.30.70.860:FF:000001">
    <property type="entry name" value="UPF0234 protein YajQ"/>
    <property type="match status" value="1"/>
</dbReference>
<dbReference type="Gene3D" id="3.30.70.860">
    <property type="match status" value="1"/>
</dbReference>
<dbReference type="Gene3D" id="3.30.70.990">
    <property type="entry name" value="YajQ-like, domain 2"/>
    <property type="match status" value="1"/>
</dbReference>
<dbReference type="HAMAP" id="MF_00632">
    <property type="entry name" value="YajQ"/>
    <property type="match status" value="1"/>
</dbReference>
<dbReference type="InterPro" id="IPR007551">
    <property type="entry name" value="DUF520"/>
</dbReference>
<dbReference type="InterPro" id="IPR035571">
    <property type="entry name" value="UPF0234-like_C"/>
</dbReference>
<dbReference type="InterPro" id="IPR035570">
    <property type="entry name" value="UPF0234_N"/>
</dbReference>
<dbReference type="InterPro" id="IPR036183">
    <property type="entry name" value="YajQ-like_sf"/>
</dbReference>
<dbReference type="NCBIfam" id="NF003819">
    <property type="entry name" value="PRK05412.1"/>
    <property type="match status" value="1"/>
</dbReference>
<dbReference type="PANTHER" id="PTHR30476">
    <property type="entry name" value="UPF0234 PROTEIN YAJQ"/>
    <property type="match status" value="1"/>
</dbReference>
<dbReference type="PANTHER" id="PTHR30476:SF0">
    <property type="entry name" value="UPF0234 PROTEIN YAJQ"/>
    <property type="match status" value="1"/>
</dbReference>
<dbReference type="Pfam" id="PF04461">
    <property type="entry name" value="DUF520"/>
    <property type="match status" value="1"/>
</dbReference>
<dbReference type="SUPFAM" id="SSF89963">
    <property type="entry name" value="YajQ-like"/>
    <property type="match status" value="2"/>
</dbReference>
<proteinExistence type="inferred from homology"/>
<feature type="chain" id="PRO_1000051758" description="Nucleotide-binding protein Shew_2893">
    <location>
        <begin position="1"/>
        <end position="161"/>
    </location>
</feature>
<protein>
    <recommendedName>
        <fullName evidence="1">Nucleotide-binding protein Shew_2893</fullName>
    </recommendedName>
</protein>